<comment type="function">
    <text evidence="1">RNA chaperone that binds small regulatory RNA (sRNAs) and mRNAs to facilitate mRNA translational regulation in response to envelope stress, environmental stress and changes in metabolite concentrations. Also binds with high specificity to tRNAs.</text>
</comment>
<comment type="subunit">
    <text evidence="1">Homohexamer.</text>
</comment>
<comment type="similarity">
    <text evidence="1">Belongs to the Hfq family.</text>
</comment>
<keyword id="KW-1185">Reference proteome</keyword>
<keyword id="KW-0694">RNA-binding</keyword>
<keyword id="KW-0346">Stress response</keyword>
<feature type="chain" id="PRO_1000060238" description="RNA-binding protein Hfq">
    <location>
        <begin position="1"/>
        <end position="102"/>
    </location>
</feature>
<feature type="domain" description="Sm" evidence="2">
    <location>
        <begin position="9"/>
        <end position="68"/>
    </location>
</feature>
<feature type="region of interest" description="Disordered" evidence="3">
    <location>
        <begin position="63"/>
        <end position="102"/>
    </location>
</feature>
<feature type="compositionally biased region" description="Polar residues" evidence="3">
    <location>
        <begin position="70"/>
        <end position="96"/>
    </location>
</feature>
<organism>
    <name type="scientific">Escherichia coli O139:H28 (strain E24377A / ETEC)</name>
    <dbReference type="NCBI Taxonomy" id="331111"/>
    <lineage>
        <taxon>Bacteria</taxon>
        <taxon>Pseudomonadati</taxon>
        <taxon>Pseudomonadota</taxon>
        <taxon>Gammaproteobacteria</taxon>
        <taxon>Enterobacterales</taxon>
        <taxon>Enterobacteriaceae</taxon>
        <taxon>Escherichia</taxon>
    </lineage>
</organism>
<accession>A7ZV41</accession>
<reference key="1">
    <citation type="journal article" date="2008" name="J. Bacteriol.">
        <title>The pangenome structure of Escherichia coli: comparative genomic analysis of E. coli commensal and pathogenic isolates.</title>
        <authorList>
            <person name="Rasko D.A."/>
            <person name="Rosovitz M.J."/>
            <person name="Myers G.S.A."/>
            <person name="Mongodin E.F."/>
            <person name="Fricke W.F."/>
            <person name="Gajer P."/>
            <person name="Crabtree J."/>
            <person name="Sebaihia M."/>
            <person name="Thomson N.R."/>
            <person name="Chaudhuri R."/>
            <person name="Henderson I.R."/>
            <person name="Sperandio V."/>
            <person name="Ravel J."/>
        </authorList>
    </citation>
    <scope>NUCLEOTIDE SEQUENCE [LARGE SCALE GENOMIC DNA]</scope>
    <source>
        <strain>E24377A / ETEC</strain>
    </source>
</reference>
<protein>
    <recommendedName>
        <fullName evidence="1">RNA-binding protein Hfq</fullName>
    </recommendedName>
</protein>
<dbReference type="EMBL" id="CP000800">
    <property type="protein sequence ID" value="ABV18584.1"/>
    <property type="molecule type" value="Genomic_DNA"/>
</dbReference>
<dbReference type="RefSeq" id="WP_001051883.1">
    <property type="nucleotide sequence ID" value="NC_009801.1"/>
</dbReference>
<dbReference type="SMR" id="A7ZV41"/>
<dbReference type="GeneID" id="93777649"/>
<dbReference type="KEGG" id="ecw:EcE24377A_4730"/>
<dbReference type="HOGENOM" id="CLU_113688_2_1_6"/>
<dbReference type="Proteomes" id="UP000001122">
    <property type="component" value="Chromosome"/>
</dbReference>
<dbReference type="GO" id="GO:0005829">
    <property type="term" value="C:cytosol"/>
    <property type="evidence" value="ECO:0007669"/>
    <property type="project" value="TreeGrafter"/>
</dbReference>
<dbReference type="GO" id="GO:0003723">
    <property type="term" value="F:RNA binding"/>
    <property type="evidence" value="ECO:0007669"/>
    <property type="project" value="UniProtKB-UniRule"/>
</dbReference>
<dbReference type="GO" id="GO:0006355">
    <property type="term" value="P:regulation of DNA-templated transcription"/>
    <property type="evidence" value="ECO:0007669"/>
    <property type="project" value="InterPro"/>
</dbReference>
<dbReference type="GO" id="GO:0043487">
    <property type="term" value="P:regulation of RNA stability"/>
    <property type="evidence" value="ECO:0007669"/>
    <property type="project" value="TreeGrafter"/>
</dbReference>
<dbReference type="GO" id="GO:0045974">
    <property type="term" value="P:regulation of translation, ncRNA-mediated"/>
    <property type="evidence" value="ECO:0007669"/>
    <property type="project" value="TreeGrafter"/>
</dbReference>
<dbReference type="CDD" id="cd01716">
    <property type="entry name" value="Hfq"/>
    <property type="match status" value="1"/>
</dbReference>
<dbReference type="FunFam" id="2.30.30.100:FF:000001">
    <property type="entry name" value="RNA-binding protein Hfq"/>
    <property type="match status" value="1"/>
</dbReference>
<dbReference type="Gene3D" id="2.30.30.100">
    <property type="match status" value="1"/>
</dbReference>
<dbReference type="HAMAP" id="MF_00436">
    <property type="entry name" value="Hfq"/>
    <property type="match status" value="1"/>
</dbReference>
<dbReference type="InterPro" id="IPR005001">
    <property type="entry name" value="Hfq"/>
</dbReference>
<dbReference type="InterPro" id="IPR010920">
    <property type="entry name" value="LSM_dom_sf"/>
</dbReference>
<dbReference type="InterPro" id="IPR047575">
    <property type="entry name" value="Sm"/>
</dbReference>
<dbReference type="NCBIfam" id="TIGR02383">
    <property type="entry name" value="Hfq"/>
    <property type="match status" value="1"/>
</dbReference>
<dbReference type="NCBIfam" id="NF001602">
    <property type="entry name" value="PRK00395.1"/>
    <property type="match status" value="1"/>
</dbReference>
<dbReference type="PANTHER" id="PTHR34772">
    <property type="entry name" value="RNA-BINDING PROTEIN HFQ"/>
    <property type="match status" value="1"/>
</dbReference>
<dbReference type="PANTHER" id="PTHR34772:SF1">
    <property type="entry name" value="RNA-BINDING PROTEIN HFQ"/>
    <property type="match status" value="1"/>
</dbReference>
<dbReference type="Pfam" id="PF17209">
    <property type="entry name" value="Hfq"/>
    <property type="match status" value="1"/>
</dbReference>
<dbReference type="SUPFAM" id="SSF50182">
    <property type="entry name" value="Sm-like ribonucleoproteins"/>
    <property type="match status" value="1"/>
</dbReference>
<dbReference type="PROSITE" id="PS52002">
    <property type="entry name" value="SM"/>
    <property type="match status" value="1"/>
</dbReference>
<evidence type="ECO:0000255" key="1">
    <source>
        <dbReference type="HAMAP-Rule" id="MF_00436"/>
    </source>
</evidence>
<evidence type="ECO:0000255" key="2">
    <source>
        <dbReference type="PROSITE-ProRule" id="PRU01346"/>
    </source>
</evidence>
<evidence type="ECO:0000256" key="3">
    <source>
        <dbReference type="SAM" id="MobiDB-lite"/>
    </source>
</evidence>
<sequence length="102" mass="11166">MAKGQSLQDPFLNALRRERVPVSIYLVNGIKLQGQIESFDQFVILLKNTVSQMVYKHAISTVVPSRPVSHHSNNAGGGTSSNYHHGSSAQNTSAQQDSEETE</sequence>
<gene>
    <name evidence="1" type="primary">hfq</name>
    <name type="ordered locus">EcE24377A_4730</name>
</gene>
<proteinExistence type="inferred from homology"/>
<name>HFQ_ECO24</name>